<dbReference type="EMBL" id="CP000970">
    <property type="protein sequence ID" value="ACB15517.1"/>
    <property type="molecule type" value="Genomic_DNA"/>
</dbReference>
<dbReference type="RefSeq" id="WP_000010733.1">
    <property type="nucleotide sequence ID" value="NC_010498.1"/>
</dbReference>
<dbReference type="SMR" id="B1LQ27"/>
<dbReference type="KEGG" id="ecm:EcSMS35_2831"/>
<dbReference type="HOGENOM" id="CLU_000445_125_0_6"/>
<dbReference type="UniPathway" id="UPA00638"/>
<dbReference type="Proteomes" id="UP000007011">
    <property type="component" value="Chromosome"/>
</dbReference>
<dbReference type="GO" id="GO:0005524">
    <property type="term" value="F:ATP binding"/>
    <property type="evidence" value="ECO:0007669"/>
    <property type="project" value="UniProtKB-UniRule"/>
</dbReference>
<dbReference type="GO" id="GO:0016887">
    <property type="term" value="F:ATP hydrolysis activity"/>
    <property type="evidence" value="ECO:0007669"/>
    <property type="project" value="InterPro"/>
</dbReference>
<dbReference type="GO" id="GO:0003677">
    <property type="term" value="F:DNA binding"/>
    <property type="evidence" value="ECO:0007669"/>
    <property type="project" value="UniProtKB-KW"/>
</dbReference>
<dbReference type="GO" id="GO:0003700">
    <property type="term" value="F:DNA-binding transcription factor activity"/>
    <property type="evidence" value="ECO:0007669"/>
    <property type="project" value="UniProtKB-UniRule"/>
</dbReference>
<dbReference type="GO" id="GO:0000160">
    <property type="term" value="P:phosphorelay signal transduction system"/>
    <property type="evidence" value="ECO:0007669"/>
    <property type="project" value="UniProtKB-UniRule"/>
</dbReference>
<dbReference type="CDD" id="cd00009">
    <property type="entry name" value="AAA"/>
    <property type="match status" value="1"/>
</dbReference>
<dbReference type="FunFam" id="1.10.10.60:FF:000188">
    <property type="entry name" value="Anaerobic nitric oxide reductase transcription regulator NorR"/>
    <property type="match status" value="1"/>
</dbReference>
<dbReference type="FunFam" id="1.10.8.60:FF:000045">
    <property type="entry name" value="Anaerobic nitric oxide reductase transcription regulator NorR"/>
    <property type="match status" value="1"/>
</dbReference>
<dbReference type="FunFam" id="3.30.450.40:FF:000021">
    <property type="entry name" value="Anaerobic nitric oxide reductase transcription regulator NorR"/>
    <property type="match status" value="1"/>
</dbReference>
<dbReference type="FunFam" id="3.40.50.300:FF:000006">
    <property type="entry name" value="DNA-binding transcriptional regulator NtrC"/>
    <property type="match status" value="1"/>
</dbReference>
<dbReference type="Gene3D" id="1.10.8.60">
    <property type="match status" value="1"/>
</dbReference>
<dbReference type="Gene3D" id="3.30.450.40">
    <property type="match status" value="1"/>
</dbReference>
<dbReference type="Gene3D" id="1.10.10.60">
    <property type="entry name" value="Homeodomain-like"/>
    <property type="match status" value="1"/>
</dbReference>
<dbReference type="Gene3D" id="3.40.50.300">
    <property type="entry name" value="P-loop containing nucleotide triphosphate hydrolases"/>
    <property type="match status" value="1"/>
</dbReference>
<dbReference type="HAMAP" id="MF_01314">
    <property type="entry name" value="NorR"/>
    <property type="match status" value="1"/>
</dbReference>
<dbReference type="InterPro" id="IPR003593">
    <property type="entry name" value="AAA+_ATPase"/>
</dbReference>
<dbReference type="InterPro" id="IPR003018">
    <property type="entry name" value="GAF"/>
</dbReference>
<dbReference type="InterPro" id="IPR029016">
    <property type="entry name" value="GAF-like_dom_sf"/>
</dbReference>
<dbReference type="InterPro" id="IPR009057">
    <property type="entry name" value="Homeodomain-like_sf"/>
</dbReference>
<dbReference type="InterPro" id="IPR023944">
    <property type="entry name" value="NorR"/>
</dbReference>
<dbReference type="InterPro" id="IPR027417">
    <property type="entry name" value="P-loop_NTPase"/>
</dbReference>
<dbReference type="InterPro" id="IPR002078">
    <property type="entry name" value="Sigma_54_int"/>
</dbReference>
<dbReference type="InterPro" id="IPR025662">
    <property type="entry name" value="Sigma_54_int_dom_ATP-bd_1"/>
</dbReference>
<dbReference type="InterPro" id="IPR025943">
    <property type="entry name" value="Sigma_54_int_dom_ATP-bd_2"/>
</dbReference>
<dbReference type="InterPro" id="IPR025944">
    <property type="entry name" value="Sigma_54_int_dom_CS"/>
</dbReference>
<dbReference type="NCBIfam" id="NF003451">
    <property type="entry name" value="PRK05022.1"/>
    <property type="match status" value="1"/>
</dbReference>
<dbReference type="PANTHER" id="PTHR32071:SF35">
    <property type="entry name" value="ANAEROBIC NITRIC OXIDE REDUCTASE TRANSCRIPTION REGULATOR NORR"/>
    <property type="match status" value="1"/>
</dbReference>
<dbReference type="PANTHER" id="PTHR32071">
    <property type="entry name" value="TRANSCRIPTIONAL REGULATORY PROTEIN"/>
    <property type="match status" value="1"/>
</dbReference>
<dbReference type="Pfam" id="PF01590">
    <property type="entry name" value="GAF"/>
    <property type="match status" value="1"/>
</dbReference>
<dbReference type="Pfam" id="PF00158">
    <property type="entry name" value="Sigma54_activat"/>
    <property type="match status" value="1"/>
</dbReference>
<dbReference type="SMART" id="SM00382">
    <property type="entry name" value="AAA"/>
    <property type="match status" value="1"/>
</dbReference>
<dbReference type="SMART" id="SM00065">
    <property type="entry name" value="GAF"/>
    <property type="match status" value="1"/>
</dbReference>
<dbReference type="SUPFAM" id="SSF55781">
    <property type="entry name" value="GAF domain-like"/>
    <property type="match status" value="1"/>
</dbReference>
<dbReference type="SUPFAM" id="SSF46689">
    <property type="entry name" value="Homeodomain-like"/>
    <property type="match status" value="1"/>
</dbReference>
<dbReference type="SUPFAM" id="SSF52540">
    <property type="entry name" value="P-loop containing nucleoside triphosphate hydrolases"/>
    <property type="match status" value="1"/>
</dbReference>
<dbReference type="PROSITE" id="PS00675">
    <property type="entry name" value="SIGMA54_INTERACT_1"/>
    <property type="match status" value="1"/>
</dbReference>
<dbReference type="PROSITE" id="PS00676">
    <property type="entry name" value="SIGMA54_INTERACT_2"/>
    <property type="match status" value="1"/>
</dbReference>
<dbReference type="PROSITE" id="PS00688">
    <property type="entry name" value="SIGMA54_INTERACT_3"/>
    <property type="match status" value="1"/>
</dbReference>
<dbReference type="PROSITE" id="PS50045">
    <property type="entry name" value="SIGMA54_INTERACT_4"/>
    <property type="match status" value="1"/>
</dbReference>
<gene>
    <name evidence="1" type="primary">norR</name>
    <name type="ordered locus">EcSMS35_2831</name>
</gene>
<comment type="function">
    <text evidence="1">Required for the expression of anaerobic nitric oxide (NO) reductase, acts as a transcriptional activator for at least the norVW operon. Activation also requires sigma-54.</text>
</comment>
<comment type="pathway">
    <text evidence="1">Nitrogen metabolism; nitric oxide reduction.</text>
</comment>
<accession>B1LQ27</accession>
<proteinExistence type="inferred from homology"/>
<feature type="chain" id="PRO_1000141193" description="Anaerobic nitric oxide reductase transcription regulator NorR">
    <location>
        <begin position="1"/>
        <end position="504"/>
    </location>
</feature>
<feature type="domain" description="Sigma-54 factor interaction" evidence="1">
    <location>
        <begin position="187"/>
        <end position="416"/>
    </location>
</feature>
<feature type="DNA-binding region" description="H-T-H motif" evidence="1">
    <location>
        <begin position="479"/>
        <end position="498"/>
    </location>
</feature>
<feature type="binding site" evidence="1">
    <location>
        <begin position="215"/>
        <end position="222"/>
    </location>
    <ligand>
        <name>ATP</name>
        <dbReference type="ChEBI" id="CHEBI:30616"/>
    </ligand>
</feature>
<feature type="binding site" evidence="1">
    <location>
        <begin position="278"/>
        <end position="287"/>
    </location>
    <ligand>
        <name>ATP</name>
        <dbReference type="ChEBI" id="CHEBI:30616"/>
    </ligand>
</feature>
<feature type="modified residue" description="4-aspartylphosphate" evidence="1">
    <location>
        <position position="57"/>
    </location>
</feature>
<evidence type="ECO:0000255" key="1">
    <source>
        <dbReference type="HAMAP-Rule" id="MF_01314"/>
    </source>
</evidence>
<keyword id="KW-0067">ATP-binding</keyword>
<keyword id="KW-0238">DNA-binding</keyword>
<keyword id="KW-0547">Nucleotide-binding</keyword>
<keyword id="KW-0597">Phosphoprotein</keyword>
<keyword id="KW-0804">Transcription</keyword>
<keyword id="KW-0805">Transcription regulation</keyword>
<name>NORR_ECOSM</name>
<reference key="1">
    <citation type="journal article" date="2008" name="J. Bacteriol.">
        <title>Insights into the environmental resistance gene pool from the genome sequence of the multidrug-resistant environmental isolate Escherichia coli SMS-3-5.</title>
        <authorList>
            <person name="Fricke W.F."/>
            <person name="Wright M.S."/>
            <person name="Lindell A.H."/>
            <person name="Harkins D.M."/>
            <person name="Baker-Austin C."/>
            <person name="Ravel J."/>
            <person name="Stepanauskas R."/>
        </authorList>
    </citation>
    <scope>NUCLEOTIDE SEQUENCE [LARGE SCALE GENOMIC DNA]</scope>
    <source>
        <strain>SMS-3-5 / SECEC</strain>
    </source>
</reference>
<organism>
    <name type="scientific">Escherichia coli (strain SMS-3-5 / SECEC)</name>
    <dbReference type="NCBI Taxonomy" id="439855"/>
    <lineage>
        <taxon>Bacteria</taxon>
        <taxon>Pseudomonadati</taxon>
        <taxon>Pseudomonadota</taxon>
        <taxon>Gammaproteobacteria</taxon>
        <taxon>Enterobacterales</taxon>
        <taxon>Enterobacteriaceae</taxon>
        <taxon>Escherichia</taxon>
    </lineage>
</organism>
<protein>
    <recommendedName>
        <fullName evidence="1">Anaerobic nitric oxide reductase transcription regulator NorR</fullName>
    </recommendedName>
</protein>
<sequence length="504" mass="55267">MSFSVDVLANIAIELQRGIGHQDRFQRLITTLRQVLECDASALLRYDSRQFIPLAIDGLAKDVLGRRFALEGHPRLEAIARAGDVVRFPADSELPDPYDGLIPGQESLKVHACVGLPLFAGQNLIGALTLDGMQPDQFDVFSDEELRLIAALAAGALSNALLIEQLESQNMLPGDAAPFEAVKQTQMIGLSPGMTQLKKEIEIVAASDLNVLISGETGTGKELVAKAIHEASPRAVNPLVYLNCAALPESVAESELFGHVKGAFTGAISNRSGKFEMADNGTLFLDEIGELSLALQAKLLRVLQYGDIQRVGDDRSLRVDVRVLAATNRDLREEVLAGRFRADLFHRLSVFPLSVPPLRERGDDVILLAGYFCEQCRLRLGLSRVVLSARARNLLQHYNFPGNVRELEHAIHRAVVLARATRSGDEVILEAQHFAFPEVTLPPPEAAAVPIVKQNLREATEAFQRETIRQALAQNHHNWAASARMLETDVANLHRLAKRLGLKD</sequence>